<evidence type="ECO:0000255" key="1">
    <source>
        <dbReference type="HAMAP-Rule" id="MF_01363"/>
    </source>
</evidence>
<evidence type="ECO:0000305" key="2"/>
<proteinExistence type="inferred from homology"/>
<accession>Q47AD2</accession>
<dbReference type="EMBL" id="CP000089">
    <property type="protein sequence ID" value="AAZ48199.1"/>
    <property type="molecule type" value="Genomic_DNA"/>
</dbReference>
<dbReference type="SMR" id="Q47AD2"/>
<dbReference type="STRING" id="159087.Daro_3470"/>
<dbReference type="KEGG" id="dar:Daro_3470"/>
<dbReference type="eggNOG" id="COG0261">
    <property type="taxonomic scope" value="Bacteria"/>
</dbReference>
<dbReference type="HOGENOM" id="CLU_061463_3_2_4"/>
<dbReference type="OrthoDB" id="9813334at2"/>
<dbReference type="GO" id="GO:0005737">
    <property type="term" value="C:cytoplasm"/>
    <property type="evidence" value="ECO:0007669"/>
    <property type="project" value="UniProtKB-ARBA"/>
</dbReference>
<dbReference type="GO" id="GO:1990904">
    <property type="term" value="C:ribonucleoprotein complex"/>
    <property type="evidence" value="ECO:0007669"/>
    <property type="project" value="UniProtKB-KW"/>
</dbReference>
<dbReference type="GO" id="GO:0005840">
    <property type="term" value="C:ribosome"/>
    <property type="evidence" value="ECO:0007669"/>
    <property type="project" value="UniProtKB-KW"/>
</dbReference>
<dbReference type="GO" id="GO:0019843">
    <property type="term" value="F:rRNA binding"/>
    <property type="evidence" value="ECO:0007669"/>
    <property type="project" value="UniProtKB-UniRule"/>
</dbReference>
<dbReference type="GO" id="GO:0003735">
    <property type="term" value="F:structural constituent of ribosome"/>
    <property type="evidence" value="ECO:0007669"/>
    <property type="project" value="InterPro"/>
</dbReference>
<dbReference type="GO" id="GO:0006412">
    <property type="term" value="P:translation"/>
    <property type="evidence" value="ECO:0007669"/>
    <property type="project" value="UniProtKB-UniRule"/>
</dbReference>
<dbReference type="HAMAP" id="MF_01363">
    <property type="entry name" value="Ribosomal_bL21"/>
    <property type="match status" value="1"/>
</dbReference>
<dbReference type="InterPro" id="IPR028909">
    <property type="entry name" value="bL21-like"/>
</dbReference>
<dbReference type="InterPro" id="IPR036164">
    <property type="entry name" value="bL21-like_sf"/>
</dbReference>
<dbReference type="InterPro" id="IPR001787">
    <property type="entry name" value="Ribosomal_bL21"/>
</dbReference>
<dbReference type="InterPro" id="IPR018258">
    <property type="entry name" value="Ribosomal_bL21_CS"/>
</dbReference>
<dbReference type="NCBIfam" id="TIGR00061">
    <property type="entry name" value="L21"/>
    <property type="match status" value="1"/>
</dbReference>
<dbReference type="PANTHER" id="PTHR21349">
    <property type="entry name" value="50S RIBOSOMAL PROTEIN L21"/>
    <property type="match status" value="1"/>
</dbReference>
<dbReference type="PANTHER" id="PTHR21349:SF0">
    <property type="entry name" value="LARGE RIBOSOMAL SUBUNIT PROTEIN BL21M"/>
    <property type="match status" value="1"/>
</dbReference>
<dbReference type="Pfam" id="PF00829">
    <property type="entry name" value="Ribosomal_L21p"/>
    <property type="match status" value="1"/>
</dbReference>
<dbReference type="SUPFAM" id="SSF141091">
    <property type="entry name" value="L21p-like"/>
    <property type="match status" value="1"/>
</dbReference>
<dbReference type="PROSITE" id="PS01169">
    <property type="entry name" value="RIBOSOMAL_L21"/>
    <property type="match status" value="1"/>
</dbReference>
<keyword id="KW-0687">Ribonucleoprotein</keyword>
<keyword id="KW-0689">Ribosomal protein</keyword>
<keyword id="KW-0694">RNA-binding</keyword>
<keyword id="KW-0699">rRNA-binding</keyword>
<protein>
    <recommendedName>
        <fullName evidence="1">Large ribosomal subunit protein bL21</fullName>
    </recommendedName>
    <alternativeName>
        <fullName evidence="2">50S ribosomal protein L21</fullName>
    </alternativeName>
</protein>
<sequence length="103" mass="11507">MYAVIKTGGKQYRVSAGQKLKVEQIPADVGAEVTLDQILMVGEGESVKIGAPFLAGATVKCTVVSHGRHDKVKIFKMRRRKHYQKRQGHRQNYTELRIDTIAA</sequence>
<organism>
    <name type="scientific">Dechloromonas aromatica (strain RCB)</name>
    <dbReference type="NCBI Taxonomy" id="159087"/>
    <lineage>
        <taxon>Bacteria</taxon>
        <taxon>Pseudomonadati</taxon>
        <taxon>Pseudomonadota</taxon>
        <taxon>Betaproteobacteria</taxon>
        <taxon>Rhodocyclales</taxon>
        <taxon>Azonexaceae</taxon>
        <taxon>Dechloromonas</taxon>
    </lineage>
</organism>
<reference key="1">
    <citation type="journal article" date="2009" name="BMC Genomics">
        <title>Metabolic analysis of the soil microbe Dechloromonas aromatica str. RCB: indications of a surprisingly complex life-style and cryptic anaerobic pathways for aromatic degradation.</title>
        <authorList>
            <person name="Salinero K.K."/>
            <person name="Keller K."/>
            <person name="Feil W.S."/>
            <person name="Feil H."/>
            <person name="Trong S."/>
            <person name="Di Bartolo G."/>
            <person name="Lapidus A."/>
        </authorList>
    </citation>
    <scope>NUCLEOTIDE SEQUENCE [LARGE SCALE GENOMIC DNA]</scope>
    <source>
        <strain>RCB</strain>
    </source>
</reference>
<feature type="chain" id="PRO_0000269310" description="Large ribosomal subunit protein bL21">
    <location>
        <begin position="1"/>
        <end position="103"/>
    </location>
</feature>
<name>RL21_DECAR</name>
<gene>
    <name evidence="1" type="primary">rplU</name>
    <name type="ordered locus">Daro_3470</name>
</gene>
<comment type="function">
    <text evidence="1">This protein binds to 23S rRNA in the presence of protein L20.</text>
</comment>
<comment type="subunit">
    <text evidence="1">Part of the 50S ribosomal subunit. Contacts protein L20.</text>
</comment>
<comment type="similarity">
    <text evidence="1">Belongs to the bacterial ribosomal protein bL21 family.</text>
</comment>